<reference key="1">
    <citation type="journal article" date="2001" name="Science">
        <title>Complete genome sequence of a virulent isolate of Streptococcus pneumoniae.</title>
        <authorList>
            <person name="Tettelin H."/>
            <person name="Nelson K.E."/>
            <person name="Paulsen I.T."/>
            <person name="Eisen J.A."/>
            <person name="Read T.D."/>
            <person name="Peterson S.N."/>
            <person name="Heidelberg J.F."/>
            <person name="DeBoy R.T."/>
            <person name="Haft D.H."/>
            <person name="Dodson R.J."/>
            <person name="Durkin A.S."/>
            <person name="Gwinn M.L."/>
            <person name="Kolonay J.F."/>
            <person name="Nelson W.C."/>
            <person name="Peterson J.D."/>
            <person name="Umayam L.A."/>
            <person name="White O."/>
            <person name="Salzberg S.L."/>
            <person name="Lewis M.R."/>
            <person name="Radune D."/>
            <person name="Holtzapple E.K."/>
            <person name="Khouri H.M."/>
            <person name="Wolf A.M."/>
            <person name="Utterback T.R."/>
            <person name="Hansen C.L."/>
            <person name="McDonald L.A."/>
            <person name="Feldblyum T.V."/>
            <person name="Angiuoli S.V."/>
            <person name="Dickinson T."/>
            <person name="Hickey E.K."/>
            <person name="Holt I.E."/>
            <person name="Loftus B.J."/>
            <person name="Yang F."/>
            <person name="Smith H.O."/>
            <person name="Venter J.C."/>
            <person name="Dougherty B.A."/>
            <person name="Morrison D.A."/>
            <person name="Hollingshead S.K."/>
            <person name="Fraser C.M."/>
        </authorList>
    </citation>
    <scope>NUCLEOTIDE SEQUENCE [LARGE SCALE GENOMIC DNA]</scope>
    <source>
        <strain>ATCC BAA-334 / TIGR4</strain>
    </source>
</reference>
<sequence length="209" mass="24258">MTIELLTPFTKVELEPEIKEKKRKQVGILGGNFNPVHNAHLIVADQVRQQLGLDQVLLMPEYQPPHVDKKETIPEHHRLKMLELAIEGIDGLVIETIELERKGISYTYDTMKILTEKNPDTDYYFIIGADMVDYLPKWYRIDELVDMVQFVGVQRPRYKVGTSYPVIWVDVPLMDISSSMVRDFLAQGRKPNFLLPQPVLDYIEKEGLY</sequence>
<organism>
    <name type="scientific">Streptococcus pneumoniae serotype 4 (strain ATCC BAA-334 / TIGR4)</name>
    <dbReference type="NCBI Taxonomy" id="170187"/>
    <lineage>
        <taxon>Bacteria</taxon>
        <taxon>Bacillati</taxon>
        <taxon>Bacillota</taxon>
        <taxon>Bacilli</taxon>
        <taxon>Lactobacillales</taxon>
        <taxon>Streptococcaceae</taxon>
        <taxon>Streptococcus</taxon>
    </lineage>
</organism>
<keyword id="KW-0067">ATP-binding</keyword>
<keyword id="KW-0520">NAD</keyword>
<keyword id="KW-0547">Nucleotide-binding</keyword>
<keyword id="KW-0548">Nucleotidyltransferase</keyword>
<keyword id="KW-0662">Pyridine nucleotide biosynthesis</keyword>
<keyword id="KW-1185">Reference proteome</keyword>
<keyword id="KW-0808">Transferase</keyword>
<dbReference type="EC" id="2.7.7.18" evidence="1"/>
<dbReference type="EMBL" id="AE005672">
    <property type="protein sequence ID" value="AAK75823.1"/>
    <property type="molecule type" value="Genomic_DNA"/>
</dbReference>
<dbReference type="PIR" id="F95203">
    <property type="entry name" value="F95203"/>
</dbReference>
<dbReference type="RefSeq" id="WP_000151313.1">
    <property type="nucleotide sequence ID" value="NZ_CP155539.1"/>
</dbReference>
<dbReference type="SMR" id="P65504"/>
<dbReference type="PaxDb" id="170187-SP_1747"/>
<dbReference type="EnsemblBacteria" id="AAK75823">
    <property type="protein sequence ID" value="AAK75823"/>
    <property type="gene ID" value="SP_1747"/>
</dbReference>
<dbReference type="KEGG" id="spn:SP_1747"/>
<dbReference type="eggNOG" id="COG1057">
    <property type="taxonomic scope" value="Bacteria"/>
</dbReference>
<dbReference type="PhylomeDB" id="P65504"/>
<dbReference type="BioCyc" id="SPNE170187:G1FZB-1770-MONOMER"/>
<dbReference type="UniPathway" id="UPA00253">
    <property type="reaction ID" value="UER00332"/>
</dbReference>
<dbReference type="Proteomes" id="UP000000585">
    <property type="component" value="Chromosome"/>
</dbReference>
<dbReference type="GO" id="GO:0005524">
    <property type="term" value="F:ATP binding"/>
    <property type="evidence" value="ECO:0007669"/>
    <property type="project" value="UniProtKB-KW"/>
</dbReference>
<dbReference type="GO" id="GO:0004515">
    <property type="term" value="F:nicotinate-nucleotide adenylyltransferase activity"/>
    <property type="evidence" value="ECO:0007669"/>
    <property type="project" value="UniProtKB-UniRule"/>
</dbReference>
<dbReference type="GO" id="GO:0009435">
    <property type="term" value="P:NAD biosynthetic process"/>
    <property type="evidence" value="ECO:0007669"/>
    <property type="project" value="UniProtKB-UniRule"/>
</dbReference>
<dbReference type="CDD" id="cd02165">
    <property type="entry name" value="NMNAT"/>
    <property type="match status" value="1"/>
</dbReference>
<dbReference type="FunFam" id="3.40.50.620:FF:000079">
    <property type="entry name" value="Probable nicotinate-nucleotide adenylyltransferase"/>
    <property type="match status" value="1"/>
</dbReference>
<dbReference type="Gene3D" id="3.40.50.620">
    <property type="entry name" value="HUPs"/>
    <property type="match status" value="1"/>
</dbReference>
<dbReference type="HAMAP" id="MF_00244">
    <property type="entry name" value="NaMN_adenylyltr"/>
    <property type="match status" value="1"/>
</dbReference>
<dbReference type="InterPro" id="IPR004821">
    <property type="entry name" value="Cyt_trans-like"/>
</dbReference>
<dbReference type="InterPro" id="IPR005248">
    <property type="entry name" value="NadD/NMNAT"/>
</dbReference>
<dbReference type="InterPro" id="IPR014729">
    <property type="entry name" value="Rossmann-like_a/b/a_fold"/>
</dbReference>
<dbReference type="NCBIfam" id="TIGR00125">
    <property type="entry name" value="cyt_tran_rel"/>
    <property type="match status" value="1"/>
</dbReference>
<dbReference type="NCBIfam" id="TIGR00482">
    <property type="entry name" value="nicotinate (nicotinamide) nucleotide adenylyltransferase"/>
    <property type="match status" value="1"/>
</dbReference>
<dbReference type="NCBIfam" id="NF000840">
    <property type="entry name" value="PRK00071.1-3"/>
    <property type="match status" value="1"/>
</dbReference>
<dbReference type="NCBIfam" id="NF000841">
    <property type="entry name" value="PRK00071.1-4"/>
    <property type="match status" value="1"/>
</dbReference>
<dbReference type="PANTHER" id="PTHR39321">
    <property type="entry name" value="NICOTINATE-NUCLEOTIDE ADENYLYLTRANSFERASE-RELATED"/>
    <property type="match status" value="1"/>
</dbReference>
<dbReference type="PANTHER" id="PTHR39321:SF3">
    <property type="entry name" value="PHOSPHOPANTETHEINE ADENYLYLTRANSFERASE"/>
    <property type="match status" value="1"/>
</dbReference>
<dbReference type="Pfam" id="PF01467">
    <property type="entry name" value="CTP_transf_like"/>
    <property type="match status" value="1"/>
</dbReference>
<dbReference type="SUPFAM" id="SSF52374">
    <property type="entry name" value="Nucleotidylyl transferase"/>
    <property type="match status" value="1"/>
</dbReference>
<accession>P65504</accession>
<accession>Q97P94</accession>
<proteinExistence type="inferred from homology"/>
<comment type="function">
    <text evidence="1">Catalyzes the reversible adenylation of nicotinate mononucleotide (NaMN) to nicotinic acid adenine dinucleotide (NaAD).</text>
</comment>
<comment type="catalytic activity">
    <reaction evidence="1">
        <text>nicotinate beta-D-ribonucleotide + ATP + H(+) = deamido-NAD(+) + diphosphate</text>
        <dbReference type="Rhea" id="RHEA:22860"/>
        <dbReference type="ChEBI" id="CHEBI:15378"/>
        <dbReference type="ChEBI" id="CHEBI:30616"/>
        <dbReference type="ChEBI" id="CHEBI:33019"/>
        <dbReference type="ChEBI" id="CHEBI:57502"/>
        <dbReference type="ChEBI" id="CHEBI:58437"/>
        <dbReference type="EC" id="2.7.7.18"/>
    </reaction>
</comment>
<comment type="pathway">
    <text evidence="1">Cofactor biosynthesis; NAD(+) biosynthesis; deamido-NAD(+) from nicotinate D-ribonucleotide: step 1/1.</text>
</comment>
<comment type="similarity">
    <text evidence="1">Belongs to the NadD family.</text>
</comment>
<name>NADD_STRPN</name>
<gene>
    <name evidence="1" type="primary">nadD</name>
    <name type="ordered locus">SP_1747</name>
</gene>
<feature type="chain" id="PRO_0000181453" description="Probable nicotinate-nucleotide adenylyltransferase">
    <location>
        <begin position="1"/>
        <end position="209"/>
    </location>
</feature>
<protein>
    <recommendedName>
        <fullName evidence="1">Probable nicotinate-nucleotide adenylyltransferase</fullName>
        <ecNumber evidence="1">2.7.7.18</ecNumber>
    </recommendedName>
    <alternativeName>
        <fullName evidence="1">Deamido-NAD(+) diphosphorylase</fullName>
    </alternativeName>
    <alternativeName>
        <fullName evidence="1">Deamido-NAD(+) pyrophosphorylase</fullName>
    </alternativeName>
    <alternativeName>
        <fullName evidence="1">Nicotinate mononucleotide adenylyltransferase</fullName>
        <shortName evidence="1">NaMN adenylyltransferase</shortName>
    </alternativeName>
</protein>
<evidence type="ECO:0000255" key="1">
    <source>
        <dbReference type="HAMAP-Rule" id="MF_00244"/>
    </source>
</evidence>